<protein>
    <recommendedName>
        <fullName evidence="1">NAD(P)H-quinone oxidoreductase subunit H, chloroplastic</fullName>
        <ecNumber evidence="1">7.1.1.-</ecNumber>
    </recommendedName>
    <alternativeName>
        <fullName>NAD(P)H dehydrogenase subunit H</fullName>
    </alternativeName>
    <alternativeName>
        <fullName evidence="1">NADH-plastoquinone oxidoreductase 49 kDa subunit</fullName>
    </alternativeName>
    <alternativeName>
        <fullName evidence="1">NADH-plastoquinone oxidoreductase subunit H</fullName>
    </alternativeName>
</protein>
<keyword id="KW-0002">3D-structure</keyword>
<keyword id="KW-0150">Chloroplast</keyword>
<keyword id="KW-0472">Membrane</keyword>
<keyword id="KW-0520">NAD</keyword>
<keyword id="KW-0521">NADP</keyword>
<keyword id="KW-0934">Plastid</keyword>
<keyword id="KW-0618">Plastoquinone</keyword>
<keyword id="KW-0874">Quinone</keyword>
<keyword id="KW-0793">Thylakoid</keyword>
<keyword id="KW-1278">Translocase</keyword>
<keyword id="KW-0813">Transport</keyword>
<name>NDHH_HORVU</name>
<geneLocation type="chloroplast"/>
<feature type="chain" id="PRO_0000118600" description="NAD(P)H-quinone oxidoreductase subunit H, chloroplastic">
    <location>
        <begin position="1"/>
        <end position="393"/>
    </location>
</feature>
<accession>O98691</accession>
<accession>A1E9P6</accession>
<evidence type="ECO:0000255" key="1">
    <source>
        <dbReference type="HAMAP-Rule" id="MF_01358"/>
    </source>
</evidence>
<organism>
    <name type="scientific">Hordeum vulgare</name>
    <name type="common">Barley</name>
    <dbReference type="NCBI Taxonomy" id="4513"/>
    <lineage>
        <taxon>Eukaryota</taxon>
        <taxon>Viridiplantae</taxon>
        <taxon>Streptophyta</taxon>
        <taxon>Embryophyta</taxon>
        <taxon>Tracheophyta</taxon>
        <taxon>Spermatophyta</taxon>
        <taxon>Magnoliopsida</taxon>
        <taxon>Liliopsida</taxon>
        <taxon>Poales</taxon>
        <taxon>Poaceae</taxon>
        <taxon>BOP clade</taxon>
        <taxon>Pooideae</taxon>
        <taxon>Triticodae</taxon>
        <taxon>Triticeae</taxon>
        <taxon>Hordeinae</taxon>
        <taxon>Hordeum</taxon>
    </lineage>
</organism>
<dbReference type="EC" id="7.1.1.-" evidence="1"/>
<dbReference type="EMBL" id="AJ011848">
    <property type="protein sequence ID" value="CAA09811.1"/>
    <property type="molecule type" value="Genomic_DNA"/>
</dbReference>
<dbReference type="EMBL" id="EF115541">
    <property type="protein sequence ID" value="ABK79468.1"/>
    <property type="molecule type" value="Genomic_DNA"/>
</dbReference>
<dbReference type="RefSeq" id="YP_010144481.1">
    <property type="nucleotide sequence ID" value="NC_056985.1"/>
</dbReference>
<dbReference type="RefSeq" id="YP_874708.1">
    <property type="nucleotide sequence ID" value="NC_008590.1"/>
</dbReference>
<dbReference type="PDB" id="7EU3">
    <property type="method" value="EM"/>
    <property type="resolution" value="3.70 A"/>
    <property type="chains" value="H=11-393"/>
</dbReference>
<dbReference type="PDBsum" id="7EU3"/>
<dbReference type="SMR" id="O98691"/>
<dbReference type="GeneID" id="4525173"/>
<dbReference type="GeneID" id="67140628"/>
<dbReference type="OMA" id="TRMDYLT"/>
<dbReference type="GO" id="GO:0009535">
    <property type="term" value="C:chloroplast thylakoid membrane"/>
    <property type="evidence" value="ECO:0007669"/>
    <property type="project" value="UniProtKB-SubCell"/>
</dbReference>
<dbReference type="GO" id="GO:0051287">
    <property type="term" value="F:NAD binding"/>
    <property type="evidence" value="ECO:0007669"/>
    <property type="project" value="InterPro"/>
</dbReference>
<dbReference type="GO" id="GO:0016655">
    <property type="term" value="F:oxidoreductase activity, acting on NAD(P)H, quinone or similar compound as acceptor"/>
    <property type="evidence" value="ECO:0007669"/>
    <property type="project" value="UniProtKB-UniRule"/>
</dbReference>
<dbReference type="GO" id="GO:0048038">
    <property type="term" value="F:quinone binding"/>
    <property type="evidence" value="ECO:0007669"/>
    <property type="project" value="UniProtKB-KW"/>
</dbReference>
<dbReference type="GO" id="GO:0019684">
    <property type="term" value="P:photosynthesis, light reaction"/>
    <property type="evidence" value="ECO:0007669"/>
    <property type="project" value="UniProtKB-UniRule"/>
</dbReference>
<dbReference type="Gene3D" id="1.10.645.10">
    <property type="entry name" value="Cytochrome-c3 Hydrogenase, chain B"/>
    <property type="match status" value="1"/>
</dbReference>
<dbReference type="HAMAP" id="MF_01358">
    <property type="entry name" value="NDH1_NuoD"/>
    <property type="match status" value="1"/>
</dbReference>
<dbReference type="InterPro" id="IPR001135">
    <property type="entry name" value="NADH_Q_OxRdtase_suD"/>
</dbReference>
<dbReference type="InterPro" id="IPR014029">
    <property type="entry name" value="NADH_UbQ_OxRdtase_49kDa_CS"/>
</dbReference>
<dbReference type="InterPro" id="IPR022885">
    <property type="entry name" value="NDH1_su_D/H"/>
</dbReference>
<dbReference type="InterPro" id="IPR029014">
    <property type="entry name" value="NiFe-Hase_large"/>
</dbReference>
<dbReference type="NCBIfam" id="NF004739">
    <property type="entry name" value="PRK06075.1"/>
    <property type="match status" value="1"/>
</dbReference>
<dbReference type="NCBIfam" id="NF005649">
    <property type="entry name" value="PRK07415.1"/>
    <property type="match status" value="1"/>
</dbReference>
<dbReference type="PANTHER" id="PTHR11993:SF10">
    <property type="entry name" value="NADH DEHYDROGENASE [UBIQUINONE] IRON-SULFUR PROTEIN 2, MITOCHONDRIAL"/>
    <property type="match status" value="1"/>
</dbReference>
<dbReference type="PANTHER" id="PTHR11993">
    <property type="entry name" value="NADH-UBIQUINONE OXIDOREDUCTASE 49 KDA SUBUNIT"/>
    <property type="match status" value="1"/>
</dbReference>
<dbReference type="Pfam" id="PF00346">
    <property type="entry name" value="Complex1_49kDa"/>
    <property type="match status" value="1"/>
</dbReference>
<dbReference type="SUPFAM" id="SSF56762">
    <property type="entry name" value="HydB/Nqo4-like"/>
    <property type="match status" value="1"/>
</dbReference>
<dbReference type="PROSITE" id="PS00535">
    <property type="entry name" value="COMPLEX1_49K"/>
    <property type="match status" value="1"/>
</dbReference>
<reference key="1">
    <citation type="journal article" date="2000" name="Nucleic Acids Res.">
        <title>Transcripts of the ndhH-D operon of barley plastids: possible role of unedited site III in splicing of the ndhA intron.</title>
        <authorList>
            <person name="del Campo E.M."/>
            <person name="Sabater B."/>
            <person name="Martin M."/>
        </authorList>
    </citation>
    <scope>NUCLEOTIDE SEQUENCE [GENOMIC DNA]</scope>
    <source>
        <strain>cv. Hassan</strain>
        <tissue>Leaf</tissue>
    </source>
</reference>
<reference key="2">
    <citation type="journal article" date="2007" name="Theor. Appl. Genet.">
        <title>Complete chloroplast genome sequences of Hordeum vulgare, Sorghum bicolor and Agrostis stolonifera, and comparative analyses with other grass genomes.</title>
        <authorList>
            <person name="Saski C."/>
            <person name="Lee S.-B."/>
            <person name="Fjellheim S."/>
            <person name="Guda C."/>
            <person name="Jansen R.K."/>
            <person name="Luo H."/>
            <person name="Tomkins J."/>
            <person name="Rognli O.A."/>
            <person name="Daniell H."/>
            <person name="Clarke J.L."/>
        </authorList>
    </citation>
    <scope>NUCLEOTIDE SEQUENCE [LARGE SCALE GENOMIC DNA]</scope>
    <source>
        <strain>cv. Morex</strain>
    </source>
</reference>
<proteinExistence type="evidence at protein level"/>
<comment type="function">
    <text evidence="1">NDH shuttles electrons from NAD(P)H:plastoquinone, via FMN and iron-sulfur (Fe-S) centers, to quinones in the photosynthetic chain and possibly in a chloroplast respiratory chain. The immediate electron acceptor for the enzyme in this species is believed to be plastoquinone. Couples the redox reaction to proton translocation, and thus conserves the redox energy in a proton gradient.</text>
</comment>
<comment type="catalytic activity">
    <reaction evidence="1">
        <text>a plastoquinone + NADH + (n+1) H(+)(in) = a plastoquinol + NAD(+) + n H(+)(out)</text>
        <dbReference type="Rhea" id="RHEA:42608"/>
        <dbReference type="Rhea" id="RHEA-COMP:9561"/>
        <dbReference type="Rhea" id="RHEA-COMP:9562"/>
        <dbReference type="ChEBI" id="CHEBI:15378"/>
        <dbReference type="ChEBI" id="CHEBI:17757"/>
        <dbReference type="ChEBI" id="CHEBI:57540"/>
        <dbReference type="ChEBI" id="CHEBI:57945"/>
        <dbReference type="ChEBI" id="CHEBI:62192"/>
    </reaction>
</comment>
<comment type="catalytic activity">
    <reaction evidence="1">
        <text>a plastoquinone + NADPH + (n+1) H(+)(in) = a plastoquinol + NADP(+) + n H(+)(out)</text>
        <dbReference type="Rhea" id="RHEA:42612"/>
        <dbReference type="Rhea" id="RHEA-COMP:9561"/>
        <dbReference type="Rhea" id="RHEA-COMP:9562"/>
        <dbReference type="ChEBI" id="CHEBI:15378"/>
        <dbReference type="ChEBI" id="CHEBI:17757"/>
        <dbReference type="ChEBI" id="CHEBI:57783"/>
        <dbReference type="ChEBI" id="CHEBI:58349"/>
        <dbReference type="ChEBI" id="CHEBI:62192"/>
    </reaction>
</comment>
<comment type="subunit">
    <text evidence="1">NDH is composed of at least 16 different subunits, 5 of which are encoded in the nucleus.</text>
</comment>
<comment type="subcellular location">
    <subcellularLocation>
        <location evidence="1">Plastid</location>
        <location evidence="1">Chloroplast thylakoid membrane</location>
        <topology evidence="1">Peripheral membrane protein</topology>
        <orientation evidence="1">Stromal side</orientation>
    </subcellularLocation>
</comment>
<comment type="similarity">
    <text evidence="1">Belongs to the complex I 49 kDa subunit family.</text>
</comment>
<sequence>MSLPLTKKDLMIVNMGPQHPSMHGVLRLIVTLDGEDVIDCEPILGYLHRGMEKIAENRTIIQYLPYVTRWDYLATMFTEAITVNAPEFLENIQIPQRASYIRVIMLELSRIASHLLWLGPFMADLGAQTPFFYIFRERELIYDLFEAATGMRMMHNYFRIGGVAADLPYGWIDKCLDFCDYFLRGVVEYQQLITQNPIFLERVEGVGFISGEEAVNWGLSGPMLRASGIQWDLRKVDPYESYNQFDWKVQWQKEGDSLARYLVRVGEMSESIKIIQQAIEKIPGGPYENLEVRRFKKEKNSEWNDFEYKFLGKKPSPNFELSRQELYVRVEAPKGELGIYLVGDDSLFPWRWKIRPPGFINLQILPQLVKKMKLADIMTILGSIDIIMGEVDR</sequence>
<gene>
    <name evidence="1" type="primary">ndhH</name>
</gene>